<protein>
    <recommendedName>
        <fullName>Uncharacterized protein 226R</fullName>
    </recommendedName>
</protein>
<feature type="chain" id="PRO_0000378032" description="Uncharacterized protein 226R">
    <location>
        <begin position="1"/>
        <end position="96"/>
    </location>
</feature>
<sequence>MLNMDCLIKTIEMEEIYKYICEISIKLGIKKENLIKLWCDEQKIYESVFDEYLALKYVSCSSCHKMQLVSDEFNFHCTFCPHYNGYAQCTFSCCYN</sequence>
<accession>Q91FU6</accession>
<keyword id="KW-1185">Reference proteome</keyword>
<name>226R_IIV6</name>
<organism>
    <name type="scientific">Invertebrate iridescent virus 6</name>
    <name type="common">IIV-6</name>
    <name type="synonym">Chilo iridescent virus</name>
    <dbReference type="NCBI Taxonomy" id="176652"/>
    <lineage>
        <taxon>Viruses</taxon>
        <taxon>Varidnaviria</taxon>
        <taxon>Bamfordvirae</taxon>
        <taxon>Nucleocytoviricota</taxon>
        <taxon>Megaviricetes</taxon>
        <taxon>Pimascovirales</taxon>
        <taxon>Iridoviridae</taxon>
        <taxon>Betairidovirinae</taxon>
        <taxon>Iridovirus</taxon>
    </lineage>
</organism>
<reference key="1">
    <citation type="journal article" date="2001" name="Virology">
        <title>Analysis of the first complete DNA sequence of an invertebrate iridovirus: coding strategy of the genome of Chilo iridescent virus.</title>
        <authorList>
            <person name="Jakob N.J."/>
            <person name="Mueller K."/>
            <person name="Bahr U."/>
            <person name="Darai G."/>
        </authorList>
    </citation>
    <scope>NUCLEOTIDE SEQUENCE [LARGE SCALE GENOMIC DNA]</scope>
</reference>
<reference key="2">
    <citation type="journal article" date="2007" name="Virol. J.">
        <title>Comparative genomic analysis of the family Iridoviridae: re-annotating and defining the core set of iridovirus genes.</title>
        <authorList>
            <person name="Eaton H.E."/>
            <person name="Metcalf J."/>
            <person name="Penny E."/>
            <person name="Tcherepanov V."/>
            <person name="Upton C."/>
            <person name="Brunetti C.R."/>
        </authorList>
    </citation>
    <scope>GENOME REANNOTATION</scope>
</reference>
<gene>
    <name type="ORF">IIV6-226R</name>
</gene>
<organismHost>
    <name type="scientific">Acheta domesticus</name>
    <name type="common">House cricket</name>
    <dbReference type="NCBI Taxonomy" id="6997"/>
</organismHost>
<organismHost>
    <name type="scientific">Chilo suppressalis</name>
    <name type="common">Asiatic rice borer moth</name>
    <dbReference type="NCBI Taxonomy" id="168631"/>
</organismHost>
<organismHost>
    <name type="scientific">Gryllus bimaculatus</name>
    <name type="common">Two-spotted cricket</name>
    <dbReference type="NCBI Taxonomy" id="6999"/>
</organismHost>
<organismHost>
    <name type="scientific">Gryllus campestris</name>
    <dbReference type="NCBI Taxonomy" id="58607"/>
</organismHost>
<organismHost>
    <name type="scientific">Spodoptera frugiperda</name>
    <name type="common">Fall armyworm</name>
    <dbReference type="NCBI Taxonomy" id="7108"/>
</organismHost>
<dbReference type="EMBL" id="AF303741">
    <property type="protein sequence ID" value="AAK82087.1"/>
    <property type="molecule type" value="Genomic_DNA"/>
</dbReference>
<dbReference type="RefSeq" id="NP_149689.1">
    <property type="nucleotide sequence ID" value="NC_003038.1"/>
</dbReference>
<dbReference type="KEGG" id="vg:1733280"/>
<dbReference type="OrthoDB" id="39685at10239"/>
<dbReference type="Proteomes" id="UP000001359">
    <property type="component" value="Genome"/>
</dbReference>
<proteinExistence type="predicted"/>